<name>TONB_HAEDU</name>
<accession>O51810</accession>
<reference key="1">
    <citation type="journal article" date="1998" name="Infect. Immun.">
        <title>Role of the Haemophilus ducreyi Ton system in internalization of heme from hemoglobin.</title>
        <authorList>
            <person name="Elkins C."/>
            <person name="Totten P.A."/>
            <person name="Olsen B."/>
            <person name="Thomas C.E."/>
        </authorList>
    </citation>
    <scope>NUCLEOTIDE SEQUENCE [GENOMIC DNA]</scope>
    <source>
        <strain>35000HP / ATCC 700724</strain>
    </source>
</reference>
<reference key="2">
    <citation type="submission" date="2003-06" db="EMBL/GenBank/DDBJ databases">
        <title>The complete genome sequence of Haemophilus ducreyi.</title>
        <authorList>
            <person name="Munson R.S. Jr."/>
            <person name="Ray W.C."/>
            <person name="Mahairas G."/>
            <person name="Sabo P."/>
            <person name="Mungur R."/>
            <person name="Johnson L."/>
            <person name="Nguyen D."/>
            <person name="Wang J."/>
            <person name="Forst C."/>
            <person name="Hood L."/>
        </authorList>
    </citation>
    <scope>NUCLEOTIDE SEQUENCE [LARGE SCALE GENOMIC DNA]</scope>
    <source>
        <strain>35000HP / ATCC 700724</strain>
    </source>
</reference>
<comment type="function">
    <text evidence="1">Interacts with outer membrane receptor proteins that carry out high-affinity binding and energy dependent uptake into the periplasmic space of specific substrates. It could act to transduce energy from the cytoplasmic membrane to specific energy-requiring processes in the outer membrane, resulting in the release into the periplasm of ligands bound by these outer membrane proteins. Required for heme utilization and virulence (By similarity).</text>
</comment>
<comment type="subcellular location">
    <subcellularLocation>
        <location evidence="1">Cell inner membrane</location>
        <topology evidence="1">Single-pass membrane protein</topology>
        <orientation evidence="1">Periplasmic side</orientation>
    </subcellularLocation>
</comment>
<comment type="similarity">
    <text evidence="5">Belongs to the TonB family.</text>
</comment>
<proteinExistence type="inferred from homology"/>
<evidence type="ECO:0000250" key="1"/>
<evidence type="ECO:0000255" key="2"/>
<evidence type="ECO:0000255" key="3">
    <source>
        <dbReference type="PROSITE-ProRule" id="PRU01359"/>
    </source>
</evidence>
<evidence type="ECO:0000256" key="4">
    <source>
        <dbReference type="SAM" id="MobiDB-lite"/>
    </source>
</evidence>
<evidence type="ECO:0000305" key="5"/>
<sequence length="279" mass="29607">MKQKHSRIGLISSVFIHIVLFASFISLVEVSHSDLSDGDSPLSIELVAALLEQPQVAVAPEEVTSTEPETFDEEPEPEPDAIPEPITKPIEKPKEKPKEKPKKPEKPKEKLKKEKPKEKAKQIEALEKGPEAKQGIVAQAVPGALQGKKEQVGISNGNPNGNSASSSDTGLVNGVLGGNGNGASSNEINAYKAALQRALQHRANNAYPAREKMMRKTGVVTLGFTISPSGKLIDVTVLNSSGNQNLDAAAVQAAEATKVAPPPIGFPPNVTVPIKFSIQ</sequence>
<gene>
    <name type="primary">tonB</name>
    <name type="ordered locus">HD_0327</name>
</gene>
<protein>
    <recommendedName>
        <fullName>Protein TonB</fullName>
    </recommendedName>
</protein>
<feature type="chain" id="PRO_0000196196" description="Protein TonB">
    <location>
        <begin position="1"/>
        <end position="279"/>
    </location>
</feature>
<feature type="topological domain" description="Cytoplasmic" evidence="2">
    <location>
        <begin position="1"/>
        <end position="7"/>
    </location>
</feature>
<feature type="transmembrane region" description="Helical; Signal-anchor" evidence="2">
    <location>
        <begin position="8"/>
        <end position="27"/>
    </location>
</feature>
<feature type="topological domain" description="Periplasmic" evidence="2">
    <location>
        <begin position="28"/>
        <end position="279"/>
    </location>
</feature>
<feature type="domain" description="TonB C-terminal" evidence="3">
    <location>
        <begin position="192"/>
        <end position="279"/>
    </location>
</feature>
<feature type="region of interest" description="Disordered" evidence="4">
    <location>
        <begin position="57"/>
        <end position="120"/>
    </location>
</feature>
<feature type="compositionally biased region" description="Acidic residues" evidence="4">
    <location>
        <begin position="69"/>
        <end position="81"/>
    </location>
</feature>
<feature type="compositionally biased region" description="Basic and acidic residues" evidence="4">
    <location>
        <begin position="89"/>
        <end position="120"/>
    </location>
</feature>
<keyword id="KW-0997">Cell inner membrane</keyword>
<keyword id="KW-1003">Cell membrane</keyword>
<keyword id="KW-0472">Membrane</keyword>
<keyword id="KW-0653">Protein transport</keyword>
<keyword id="KW-1185">Reference proteome</keyword>
<keyword id="KW-0677">Repeat</keyword>
<keyword id="KW-0735">Signal-anchor</keyword>
<keyword id="KW-0812">Transmembrane</keyword>
<keyword id="KW-1133">Transmembrane helix</keyword>
<keyword id="KW-0813">Transport</keyword>
<keyword id="KW-0843">Virulence</keyword>
<organism>
    <name type="scientific">Haemophilus ducreyi (strain 35000HP / ATCC 700724)</name>
    <dbReference type="NCBI Taxonomy" id="233412"/>
    <lineage>
        <taxon>Bacteria</taxon>
        <taxon>Pseudomonadati</taxon>
        <taxon>Pseudomonadota</taxon>
        <taxon>Gammaproteobacteria</taxon>
        <taxon>Pasteurellales</taxon>
        <taxon>Pasteurellaceae</taxon>
        <taxon>Haemophilus</taxon>
    </lineage>
</organism>
<dbReference type="EMBL" id="AF001034">
    <property type="protein sequence ID" value="AAC01947.1"/>
    <property type="molecule type" value="Genomic_DNA"/>
</dbReference>
<dbReference type="EMBL" id="AE017143">
    <property type="protein sequence ID" value="AAP95304.1"/>
    <property type="molecule type" value="Genomic_DNA"/>
</dbReference>
<dbReference type="RefSeq" id="WP_010944357.1">
    <property type="nucleotide sequence ID" value="NC_002940.2"/>
</dbReference>
<dbReference type="SMR" id="O51810"/>
<dbReference type="STRING" id="233412.HD_0327"/>
<dbReference type="KEGG" id="hdu:HD_0327"/>
<dbReference type="eggNOG" id="COG0810">
    <property type="taxonomic scope" value="Bacteria"/>
</dbReference>
<dbReference type="HOGENOM" id="CLU_917659_0_0_6"/>
<dbReference type="OrthoDB" id="9115347at2"/>
<dbReference type="Proteomes" id="UP000001022">
    <property type="component" value="Chromosome"/>
</dbReference>
<dbReference type="GO" id="GO:0030288">
    <property type="term" value="C:outer membrane-bounded periplasmic space"/>
    <property type="evidence" value="ECO:0007669"/>
    <property type="project" value="InterPro"/>
</dbReference>
<dbReference type="GO" id="GO:0098797">
    <property type="term" value="C:plasma membrane protein complex"/>
    <property type="evidence" value="ECO:0007669"/>
    <property type="project" value="TreeGrafter"/>
</dbReference>
<dbReference type="GO" id="GO:0031992">
    <property type="term" value="F:energy transducer activity"/>
    <property type="evidence" value="ECO:0007669"/>
    <property type="project" value="InterPro"/>
</dbReference>
<dbReference type="GO" id="GO:0015031">
    <property type="term" value="P:protein transport"/>
    <property type="evidence" value="ECO:0007669"/>
    <property type="project" value="UniProtKB-KW"/>
</dbReference>
<dbReference type="GO" id="GO:0015891">
    <property type="term" value="P:siderophore transport"/>
    <property type="evidence" value="ECO:0007669"/>
    <property type="project" value="InterPro"/>
</dbReference>
<dbReference type="GO" id="GO:0055085">
    <property type="term" value="P:transmembrane transport"/>
    <property type="evidence" value="ECO:0007669"/>
    <property type="project" value="InterPro"/>
</dbReference>
<dbReference type="Gene3D" id="3.30.1150.10">
    <property type="match status" value="1"/>
</dbReference>
<dbReference type="InterPro" id="IPR003538">
    <property type="entry name" value="TonB"/>
</dbReference>
<dbReference type="InterPro" id="IPR051045">
    <property type="entry name" value="TonB-dependent_transducer"/>
</dbReference>
<dbReference type="InterPro" id="IPR006260">
    <property type="entry name" value="TonB/TolA_C"/>
</dbReference>
<dbReference type="InterPro" id="IPR037682">
    <property type="entry name" value="TonB_C"/>
</dbReference>
<dbReference type="InterPro" id="IPR049924">
    <property type="entry name" value="TonB_pro-rich"/>
</dbReference>
<dbReference type="NCBIfam" id="TIGR01352">
    <property type="entry name" value="tonB_Cterm"/>
    <property type="match status" value="1"/>
</dbReference>
<dbReference type="PANTHER" id="PTHR33446:SF2">
    <property type="entry name" value="PROTEIN TONB"/>
    <property type="match status" value="1"/>
</dbReference>
<dbReference type="PANTHER" id="PTHR33446">
    <property type="entry name" value="PROTEIN TONB-RELATED"/>
    <property type="match status" value="1"/>
</dbReference>
<dbReference type="Pfam" id="PF03544">
    <property type="entry name" value="TonB_C"/>
    <property type="match status" value="1"/>
</dbReference>
<dbReference type="Pfam" id="PF16031">
    <property type="entry name" value="TonB_N"/>
    <property type="match status" value="1"/>
</dbReference>
<dbReference type="PRINTS" id="PR01374">
    <property type="entry name" value="TONBPROTEIN"/>
</dbReference>
<dbReference type="SUPFAM" id="SSF74653">
    <property type="entry name" value="TolA/TonB C-terminal domain"/>
    <property type="match status" value="1"/>
</dbReference>
<dbReference type="PROSITE" id="PS52015">
    <property type="entry name" value="TONB_CTD"/>
    <property type="match status" value="1"/>
</dbReference>